<feature type="chain" id="PRO_0000272692" description="Large ribosomal subunit protein uL23">
    <location>
        <begin position="1"/>
        <end position="97"/>
    </location>
</feature>
<proteinExistence type="inferred from homology"/>
<organism>
    <name type="scientific">Agrobacterium fabrum (strain C58 / ATCC 33970)</name>
    <name type="common">Agrobacterium tumefaciens (strain C58)</name>
    <dbReference type="NCBI Taxonomy" id="176299"/>
    <lineage>
        <taxon>Bacteria</taxon>
        <taxon>Pseudomonadati</taxon>
        <taxon>Pseudomonadota</taxon>
        <taxon>Alphaproteobacteria</taxon>
        <taxon>Hyphomicrobiales</taxon>
        <taxon>Rhizobiaceae</taxon>
        <taxon>Rhizobium/Agrobacterium group</taxon>
        <taxon>Agrobacterium</taxon>
        <taxon>Agrobacterium tumefaciens complex</taxon>
    </lineage>
</organism>
<dbReference type="EMBL" id="AE007869">
    <property type="protein sequence ID" value="AAK87706.1"/>
    <property type="molecule type" value="Genomic_DNA"/>
</dbReference>
<dbReference type="PIR" id="A97594">
    <property type="entry name" value="A97594"/>
</dbReference>
<dbReference type="PIR" id="AF2815">
    <property type="entry name" value="AF2815"/>
</dbReference>
<dbReference type="RefSeq" id="NP_354921.1">
    <property type="nucleotide sequence ID" value="NC_003062.2"/>
</dbReference>
<dbReference type="RefSeq" id="WP_006313971.1">
    <property type="nucleotide sequence ID" value="NC_003062.2"/>
</dbReference>
<dbReference type="SMR" id="Q8UE20"/>
<dbReference type="STRING" id="176299.Atu1944"/>
<dbReference type="EnsemblBacteria" id="AAK87706">
    <property type="protein sequence ID" value="AAK87706"/>
    <property type="gene ID" value="Atu1944"/>
</dbReference>
<dbReference type="GeneID" id="1133982"/>
<dbReference type="KEGG" id="atu:Atu1944"/>
<dbReference type="PATRIC" id="fig|176299.10.peg.1956"/>
<dbReference type="eggNOG" id="COG0089">
    <property type="taxonomic scope" value="Bacteria"/>
</dbReference>
<dbReference type="HOGENOM" id="CLU_037562_3_1_5"/>
<dbReference type="OrthoDB" id="9793353at2"/>
<dbReference type="PhylomeDB" id="Q8UE20"/>
<dbReference type="BioCyc" id="AGRO:ATU1944-MONOMER"/>
<dbReference type="Proteomes" id="UP000000813">
    <property type="component" value="Chromosome circular"/>
</dbReference>
<dbReference type="GO" id="GO:1990904">
    <property type="term" value="C:ribonucleoprotein complex"/>
    <property type="evidence" value="ECO:0007669"/>
    <property type="project" value="UniProtKB-KW"/>
</dbReference>
<dbReference type="GO" id="GO:0005840">
    <property type="term" value="C:ribosome"/>
    <property type="evidence" value="ECO:0007669"/>
    <property type="project" value="UniProtKB-KW"/>
</dbReference>
<dbReference type="GO" id="GO:0019843">
    <property type="term" value="F:rRNA binding"/>
    <property type="evidence" value="ECO:0007669"/>
    <property type="project" value="UniProtKB-UniRule"/>
</dbReference>
<dbReference type="GO" id="GO:0003735">
    <property type="term" value="F:structural constituent of ribosome"/>
    <property type="evidence" value="ECO:0007669"/>
    <property type="project" value="InterPro"/>
</dbReference>
<dbReference type="GO" id="GO:0006412">
    <property type="term" value="P:translation"/>
    <property type="evidence" value="ECO:0007669"/>
    <property type="project" value="UniProtKB-UniRule"/>
</dbReference>
<dbReference type="FunFam" id="3.30.70.330:FF:000001">
    <property type="entry name" value="50S ribosomal protein L23"/>
    <property type="match status" value="1"/>
</dbReference>
<dbReference type="Gene3D" id="3.30.70.330">
    <property type="match status" value="1"/>
</dbReference>
<dbReference type="HAMAP" id="MF_01369_B">
    <property type="entry name" value="Ribosomal_uL23_B"/>
    <property type="match status" value="1"/>
</dbReference>
<dbReference type="InterPro" id="IPR012677">
    <property type="entry name" value="Nucleotide-bd_a/b_plait_sf"/>
</dbReference>
<dbReference type="InterPro" id="IPR013025">
    <property type="entry name" value="Ribosomal_uL23-like"/>
</dbReference>
<dbReference type="InterPro" id="IPR012678">
    <property type="entry name" value="Ribosomal_uL23/eL15/eS24_sf"/>
</dbReference>
<dbReference type="NCBIfam" id="NF004359">
    <property type="entry name" value="PRK05738.1-3"/>
    <property type="match status" value="1"/>
</dbReference>
<dbReference type="NCBIfam" id="NF004360">
    <property type="entry name" value="PRK05738.1-5"/>
    <property type="match status" value="1"/>
</dbReference>
<dbReference type="NCBIfam" id="NF004363">
    <property type="entry name" value="PRK05738.2-4"/>
    <property type="match status" value="1"/>
</dbReference>
<dbReference type="PANTHER" id="PTHR11620">
    <property type="entry name" value="60S RIBOSOMAL PROTEIN L23A"/>
    <property type="match status" value="1"/>
</dbReference>
<dbReference type="Pfam" id="PF00276">
    <property type="entry name" value="Ribosomal_L23"/>
    <property type="match status" value="1"/>
</dbReference>
<dbReference type="SUPFAM" id="SSF54189">
    <property type="entry name" value="Ribosomal proteins S24e, L23 and L15e"/>
    <property type="match status" value="1"/>
</dbReference>
<accession>Q8UE20</accession>
<accession>Q7CY73</accession>
<sequence length="97" mass="10503">MTDLRHYDVIVSPSITEKSTLVSEQNQVVFNVAKTASKPEIKAAVEALFGVKVTAVNTLIRKGKTRRFRGFAGKLKDVKKAVVTLAEGQSIDVSTGL</sequence>
<name>RL23_AGRFC</name>
<keyword id="KW-1185">Reference proteome</keyword>
<keyword id="KW-0687">Ribonucleoprotein</keyword>
<keyword id="KW-0689">Ribosomal protein</keyword>
<keyword id="KW-0694">RNA-binding</keyword>
<keyword id="KW-0699">rRNA-binding</keyword>
<protein>
    <recommendedName>
        <fullName evidence="1">Large ribosomal subunit protein uL23</fullName>
    </recommendedName>
    <alternativeName>
        <fullName evidence="2">50S ribosomal protein L23</fullName>
    </alternativeName>
</protein>
<gene>
    <name evidence="1" type="primary">rplW</name>
    <name type="ordered locus">Atu1944</name>
    <name type="ORF">AGR_C_3552</name>
</gene>
<reference key="1">
    <citation type="journal article" date="2001" name="Science">
        <title>The genome of the natural genetic engineer Agrobacterium tumefaciens C58.</title>
        <authorList>
            <person name="Wood D.W."/>
            <person name="Setubal J.C."/>
            <person name="Kaul R."/>
            <person name="Monks D.E."/>
            <person name="Kitajima J.P."/>
            <person name="Okura V.K."/>
            <person name="Zhou Y."/>
            <person name="Chen L."/>
            <person name="Wood G.E."/>
            <person name="Almeida N.F. Jr."/>
            <person name="Woo L."/>
            <person name="Chen Y."/>
            <person name="Paulsen I.T."/>
            <person name="Eisen J.A."/>
            <person name="Karp P.D."/>
            <person name="Bovee D. Sr."/>
            <person name="Chapman P."/>
            <person name="Clendenning J."/>
            <person name="Deatherage G."/>
            <person name="Gillet W."/>
            <person name="Grant C."/>
            <person name="Kutyavin T."/>
            <person name="Levy R."/>
            <person name="Li M.-J."/>
            <person name="McClelland E."/>
            <person name="Palmieri A."/>
            <person name="Raymond C."/>
            <person name="Rouse G."/>
            <person name="Saenphimmachak C."/>
            <person name="Wu Z."/>
            <person name="Romero P."/>
            <person name="Gordon D."/>
            <person name="Zhang S."/>
            <person name="Yoo H."/>
            <person name="Tao Y."/>
            <person name="Biddle P."/>
            <person name="Jung M."/>
            <person name="Krespan W."/>
            <person name="Perry M."/>
            <person name="Gordon-Kamm B."/>
            <person name="Liao L."/>
            <person name="Kim S."/>
            <person name="Hendrick C."/>
            <person name="Zhao Z.-Y."/>
            <person name="Dolan M."/>
            <person name="Chumley F."/>
            <person name="Tingey S.V."/>
            <person name="Tomb J.-F."/>
            <person name="Gordon M.P."/>
            <person name="Olson M.V."/>
            <person name="Nester E.W."/>
        </authorList>
    </citation>
    <scope>NUCLEOTIDE SEQUENCE [LARGE SCALE GENOMIC DNA]</scope>
    <source>
        <strain>C58 / ATCC 33970</strain>
    </source>
</reference>
<reference key="2">
    <citation type="journal article" date="2001" name="Science">
        <title>Genome sequence of the plant pathogen and biotechnology agent Agrobacterium tumefaciens C58.</title>
        <authorList>
            <person name="Goodner B."/>
            <person name="Hinkle G."/>
            <person name="Gattung S."/>
            <person name="Miller N."/>
            <person name="Blanchard M."/>
            <person name="Qurollo B."/>
            <person name="Goldman B.S."/>
            <person name="Cao Y."/>
            <person name="Askenazi M."/>
            <person name="Halling C."/>
            <person name="Mullin L."/>
            <person name="Houmiel K."/>
            <person name="Gordon J."/>
            <person name="Vaudin M."/>
            <person name="Iartchouk O."/>
            <person name="Epp A."/>
            <person name="Liu F."/>
            <person name="Wollam C."/>
            <person name="Allinger M."/>
            <person name="Doughty D."/>
            <person name="Scott C."/>
            <person name="Lappas C."/>
            <person name="Markelz B."/>
            <person name="Flanagan C."/>
            <person name="Crowell C."/>
            <person name="Gurson J."/>
            <person name="Lomo C."/>
            <person name="Sear C."/>
            <person name="Strub G."/>
            <person name="Cielo C."/>
            <person name="Slater S."/>
        </authorList>
    </citation>
    <scope>NUCLEOTIDE SEQUENCE [LARGE SCALE GENOMIC DNA]</scope>
    <source>
        <strain>C58 / ATCC 33970</strain>
    </source>
</reference>
<comment type="function">
    <text evidence="1">One of the early assembly proteins it binds 23S rRNA. One of the proteins that surrounds the polypeptide exit tunnel on the outside of the ribosome. Forms the main docking site for trigger factor binding to the ribosome.</text>
</comment>
<comment type="subunit">
    <text evidence="1">Part of the 50S ribosomal subunit. Contacts protein L29, and trigger factor when it is bound to the ribosome.</text>
</comment>
<comment type="similarity">
    <text evidence="1">Belongs to the universal ribosomal protein uL23 family.</text>
</comment>
<evidence type="ECO:0000255" key="1">
    <source>
        <dbReference type="HAMAP-Rule" id="MF_01369"/>
    </source>
</evidence>
<evidence type="ECO:0000305" key="2"/>